<accession>A0A0B4J262</accession>
<comment type="function">
    <text evidence="3 5 6 7">V region of the variable domain of T cell receptor (TR) alpha chain that participates in the antigen recognition (PubMed:24600447). Alpha-beta T cell receptors are antigen specific receptors which are essential to the immune response and are present on the cell surface of T lymphocytes. Recognize peptide-major histocompatibility (MH) (pMH) complexes that are displayed by antigen presenting cells (APC), a prerequisite for efficient T cell adaptive immunity against pathogens (PubMed:25493333). Binding of alpha-beta TR to pMH complex initiates TR-CD3 clustering on the cell surface and intracellular activation of LCK that phosphorylates the ITAM motifs of CD3G, CD3D, CD3E and CD247 enabling the recruitment of ZAP70. In turn ZAP70 phosphorylates LAT, which recruits numerous signaling molecules to form the LAT signalosome. The LAT signalosome propagates signal branching to three major signaling pathways, the calcium, the mitogen-activated protein kinase (MAPK) kinase and the nuclear factor NF-kappa-B (NF-kB) pathways, leading to the mobilization of transcription factors that are critical for gene expression and essential for T cell growth and differentiation (PubMed:23524462). The T cell repertoire is generated in the thymus, by V-(D)-J rearrangement. This repertoire is then shaped by intrathymic selection events to generate a peripheral T cell pool of self-MH restricted, non-autoaggressive T cells. Post-thymic interaction of alpha-beta TR with the pMH complexes shapes TR structural and functional avidity (PubMed:15040585).</text>
</comment>
<comment type="subunit">
    <text evidence="4">Alpha-beta TR is a heterodimer composed of an alpha and beta chain; disulfide-linked. The alpha-beta TR is associated with the transmembrane signaling CD3 coreceptor proteins to form the TR-CD3 (TcR or TCR). The assembly of alpha-beta TR heterodimers with CD3 occurs in the endoplasmic reticulum where a single alpha-beta TR heterodimer associates with one CD3D-CD3E heterodimer, one CD3G-CD3E heterodimer and one CD247 homodimer forming a stable octameric structure. CD3D-CD3E and CD3G-CD3E heterodimers preferentially associate with TR alpha and TR beta chains, respectively. The association of the CD247 homodimer is the last step of TcR assembly in the endoplasmic reticulum and is required for transport to the cell surface.</text>
</comment>
<comment type="subcellular location">
    <subcellularLocation>
        <location evidence="4">Cell membrane</location>
    </subcellularLocation>
</comment>
<comment type="polymorphism">
    <text evidence="9">There are several alleles. The sequence shown is that of IMGT allele TRAV8-6*01.</text>
</comment>
<evidence type="ECO:0000255" key="1"/>
<evidence type="ECO:0000255" key="2">
    <source>
        <dbReference type="PROSITE-ProRule" id="PRU00114"/>
    </source>
</evidence>
<evidence type="ECO:0000303" key="3">
    <source>
    </source>
</evidence>
<evidence type="ECO:0000303" key="4">
    <source>
    </source>
</evidence>
<evidence type="ECO:0000303" key="5">
    <source>
    </source>
</evidence>
<evidence type="ECO:0000303" key="6">
    <source>
    </source>
</evidence>
<evidence type="ECO:0000303" key="7">
    <source>
    </source>
</evidence>
<evidence type="ECO:0000303" key="8">
    <source ref="2"/>
</evidence>
<evidence type="ECO:0000305" key="9"/>
<gene>
    <name evidence="8" type="primary">TRAV8-6</name>
</gene>
<proteinExistence type="inferred from homology"/>
<keyword id="KW-1064">Adaptive immunity</keyword>
<keyword id="KW-1003">Cell membrane</keyword>
<keyword id="KW-1015">Disulfide bond</keyword>
<keyword id="KW-0325">Glycoprotein</keyword>
<keyword id="KW-0391">Immunity</keyword>
<keyword id="KW-0393">Immunoglobulin domain</keyword>
<keyword id="KW-0472">Membrane</keyword>
<keyword id="KW-0675">Receptor</keyword>
<keyword id="KW-1185">Reference proteome</keyword>
<keyword id="KW-0732">Signal</keyword>
<keyword id="KW-1279">T cell receptor</keyword>
<sequence>MLLLLVPAFQVIFTLGGTRAQSVTQLDSQVPVFEEAPVELRCNYSSSVSVYLFWYVQYPNQGLQLLLKYLSGSTLVESINGFEAEFNKSQTSFHLRKPSVHISDTAEYFCAVS</sequence>
<protein>
    <recommendedName>
        <fullName evidence="8">T cell receptor alpha variable 8-6</fullName>
    </recommendedName>
</protein>
<feature type="signal peptide" evidence="1">
    <location>
        <begin position="1"/>
        <end position="20"/>
    </location>
</feature>
<feature type="chain" id="PRO_0000443260" description="T cell receptor alpha variable 8-6" evidence="1">
    <location>
        <begin position="21"/>
        <end position="113"/>
    </location>
</feature>
<feature type="domain" description="Ig-like" evidence="2">
    <location>
        <begin position="21"/>
        <end position="113" status="greater than"/>
    </location>
</feature>
<feature type="glycosylation site" description="N-linked (GlcNAc...) asparagine" evidence="1">
    <location>
        <position position="43"/>
    </location>
</feature>
<feature type="glycosylation site" description="N-linked (GlcNAc...) asparagine" evidence="1">
    <location>
        <position position="87"/>
    </location>
</feature>
<feature type="disulfide bond" evidence="2">
    <location>
        <begin position="42"/>
        <end position="110"/>
    </location>
</feature>
<feature type="non-terminal residue">
    <location>
        <position position="113"/>
    </location>
</feature>
<name>TVA86_HUMAN</name>
<organism>
    <name type="scientific">Homo sapiens</name>
    <name type="common">Human</name>
    <dbReference type="NCBI Taxonomy" id="9606"/>
    <lineage>
        <taxon>Eukaryota</taxon>
        <taxon>Metazoa</taxon>
        <taxon>Chordata</taxon>
        <taxon>Craniata</taxon>
        <taxon>Vertebrata</taxon>
        <taxon>Euteleostomi</taxon>
        <taxon>Mammalia</taxon>
        <taxon>Eutheria</taxon>
        <taxon>Euarchontoglires</taxon>
        <taxon>Primates</taxon>
        <taxon>Haplorrhini</taxon>
        <taxon>Catarrhini</taxon>
        <taxon>Hominidae</taxon>
        <taxon>Homo</taxon>
    </lineage>
</organism>
<reference key="1">
    <citation type="journal article" date="2003" name="Nature">
        <title>The DNA sequence and analysis of human chromosome 14.</title>
        <authorList>
            <person name="Heilig R."/>
            <person name="Eckenberg R."/>
            <person name="Petit J.-L."/>
            <person name="Fonknechten N."/>
            <person name="Da Silva C."/>
            <person name="Cattolico L."/>
            <person name="Levy M."/>
            <person name="Barbe V."/>
            <person name="De Berardinis V."/>
            <person name="Ureta-Vidal A."/>
            <person name="Pelletier E."/>
            <person name="Vico V."/>
            <person name="Anthouard V."/>
            <person name="Rowen L."/>
            <person name="Madan A."/>
            <person name="Qin S."/>
            <person name="Sun H."/>
            <person name="Du H."/>
            <person name="Pepin K."/>
            <person name="Artiguenave F."/>
            <person name="Robert C."/>
            <person name="Cruaud C."/>
            <person name="Bruels T."/>
            <person name="Jaillon O."/>
            <person name="Friedlander L."/>
            <person name="Samson G."/>
            <person name="Brottier P."/>
            <person name="Cure S."/>
            <person name="Segurens B."/>
            <person name="Aniere F."/>
            <person name="Samain S."/>
            <person name="Crespeau H."/>
            <person name="Abbasi N."/>
            <person name="Aiach N."/>
            <person name="Boscus D."/>
            <person name="Dickhoff R."/>
            <person name="Dors M."/>
            <person name="Dubois I."/>
            <person name="Friedman C."/>
            <person name="Gouyvenoux M."/>
            <person name="James R."/>
            <person name="Madan A."/>
            <person name="Mairey-Estrada B."/>
            <person name="Mangenot S."/>
            <person name="Martins N."/>
            <person name="Menard M."/>
            <person name="Oztas S."/>
            <person name="Ratcliffe A."/>
            <person name="Shaffer T."/>
            <person name="Trask B."/>
            <person name="Vacherie B."/>
            <person name="Bellemere C."/>
            <person name="Belser C."/>
            <person name="Besnard-Gonnet M."/>
            <person name="Bartol-Mavel D."/>
            <person name="Boutard M."/>
            <person name="Briez-Silla S."/>
            <person name="Combette S."/>
            <person name="Dufosse-Laurent V."/>
            <person name="Ferron C."/>
            <person name="Lechaplais C."/>
            <person name="Louesse C."/>
            <person name="Muselet D."/>
            <person name="Magdelenat G."/>
            <person name="Pateau E."/>
            <person name="Petit E."/>
            <person name="Sirvain-Trukniewicz P."/>
            <person name="Trybou A."/>
            <person name="Vega-Czarny N."/>
            <person name="Bataille E."/>
            <person name="Bluet E."/>
            <person name="Bordelais I."/>
            <person name="Dubois M."/>
            <person name="Dumont C."/>
            <person name="Guerin T."/>
            <person name="Haffray S."/>
            <person name="Hammadi R."/>
            <person name="Muanga J."/>
            <person name="Pellouin V."/>
            <person name="Robert D."/>
            <person name="Wunderle E."/>
            <person name="Gauguet G."/>
            <person name="Roy A."/>
            <person name="Sainte-Marthe L."/>
            <person name="Verdier J."/>
            <person name="Verdier-Discala C."/>
            <person name="Hillier L.W."/>
            <person name="Fulton L."/>
            <person name="McPherson J."/>
            <person name="Matsuda F."/>
            <person name="Wilson R."/>
            <person name="Scarpelli C."/>
            <person name="Gyapay G."/>
            <person name="Wincker P."/>
            <person name="Saurin W."/>
            <person name="Quetier F."/>
            <person name="Waterston R."/>
            <person name="Hood L."/>
            <person name="Weissenbach J."/>
        </authorList>
    </citation>
    <scope>NUCLEOTIDE SEQUENCE [LARGE SCALE GENOMIC DNA] (IMGT ALLELE TRAV8-6*01)</scope>
</reference>
<reference key="2">
    <citation type="book" date="2001" name="The T Cell Receptor FactsBook.">
        <title>The T Cell Receptor FactsBook.</title>
        <editorList>
            <person name="Lefranc M.P."/>
            <person name="Lefranc G."/>
        </editorList>
        <authorList>
            <person name="Lefranc M.P."/>
            <person name="Lefranc G."/>
        </authorList>
    </citation>
    <scope>NOMENCLATURE</scope>
</reference>
<reference key="3">
    <citation type="journal article" date="2004" name="Nat. Rev. Immunol.">
        <title>The many important facets of T-cell repertoire diversity.</title>
        <authorList>
            <person name="Nikolich-Zugich J."/>
            <person name="Slifka M.K."/>
            <person name="Messaoudi I."/>
        </authorList>
    </citation>
    <scope>REVIEW ON T CELL REPERTOIRE DIVERSITY</scope>
</reference>
<reference key="4">
    <citation type="journal article" date="2010" name="Cold Spring Harb. Perspect. Biol.">
        <title>Structural biology of the T-cell receptor: insights into receptor assembly, ligand recognition, and initiation of signaling.</title>
        <authorList>
            <person name="Wucherpfennig K.W."/>
            <person name="Gagnon E."/>
            <person name="Call M.J."/>
            <person name="Huseby E.S."/>
            <person name="Call M.E."/>
        </authorList>
    </citation>
    <scope>REVIEW ON T CELL RECEPTOR-CD3 COMPLEX ASSEMBLY</scope>
    <scope>SUBCELLULAR LOCATION</scope>
</reference>
<reference key="5">
    <citation type="journal article" date="2013" name="Nat. Rev. Immunol.">
        <title>T cell receptor signalling networks: branched, diversified and bounded.</title>
        <authorList>
            <person name="Brownlie R.J."/>
            <person name="Zamoyska R."/>
        </authorList>
    </citation>
    <scope>REVIEW ON T CELL RECEPTOR SIGNALING</scope>
</reference>
<reference key="6">
    <citation type="journal article" date="2014" name="Front. Immunol.">
        <title>Immunoglobulin and T Cell Receptor Genes: IMGT((R)) and the Birth and Rise of Immunoinformatics.</title>
        <authorList>
            <person name="Lefranc M.P."/>
        </authorList>
    </citation>
    <scope>NOMENCLATURE</scope>
</reference>
<reference key="7">
    <citation type="journal article" date="2015" name="Annu. Rev. Immunol.">
        <title>T cell antigen receptor recognition of antigen-presenting molecules.</title>
        <authorList>
            <person name="Rossjohn J."/>
            <person name="Gras S."/>
            <person name="Miles J.J."/>
            <person name="Turner S.J."/>
            <person name="Godfrey D.I."/>
            <person name="McCluskey J."/>
        </authorList>
    </citation>
    <scope>REVIEW ON FUNCTION</scope>
</reference>
<dbReference type="EMBL" id="AC245505">
    <property type="status" value="NOT_ANNOTATED_CDS"/>
    <property type="molecule type" value="Genomic_DNA"/>
</dbReference>
<dbReference type="SMR" id="A0A0B4J262"/>
<dbReference type="FunCoup" id="A0A0B4J262">
    <property type="interactions" value="318"/>
</dbReference>
<dbReference type="IMGT_GENE-DB" id="TRAV8-6"/>
<dbReference type="GlyCosmos" id="A0A0B4J262">
    <property type="glycosylation" value="2 sites, No reported glycans"/>
</dbReference>
<dbReference type="GlyGen" id="A0A0B4J262">
    <property type="glycosylation" value="2 sites"/>
</dbReference>
<dbReference type="BioMuta" id="TRAV8-6"/>
<dbReference type="Ensembl" id="ENST00000390443.3">
    <property type="protein sequence ID" value="ENSP00000450505.1"/>
    <property type="gene ID" value="ENSG00000211795.3"/>
</dbReference>
<dbReference type="AGR" id="HGNC:12151"/>
<dbReference type="GeneCards" id="TRAV8-6"/>
<dbReference type="HGNC" id="HGNC:12151">
    <property type="gene designation" value="TRAV8-6"/>
</dbReference>
<dbReference type="HPA" id="ENSG00000211795">
    <property type="expression patterns" value="Tissue enriched (lymphoid)"/>
</dbReference>
<dbReference type="neXtProt" id="NX_A0A0B4J262"/>
<dbReference type="OpenTargets" id="ENSG00000211795"/>
<dbReference type="VEuPathDB" id="HostDB:ENSG00000211795"/>
<dbReference type="GeneTree" id="ENSGT00940000153073"/>
<dbReference type="HOGENOM" id="CLU_077975_8_0_1"/>
<dbReference type="InParanoid" id="A0A0B4J262"/>
<dbReference type="OMA" id="VTQPDAY"/>
<dbReference type="OrthoDB" id="8947657at2759"/>
<dbReference type="PAN-GO" id="A0A0B4J262">
    <property type="GO annotations" value="0 GO annotations based on evolutionary models"/>
</dbReference>
<dbReference type="ChiTaRS" id="TRAV8-6">
    <property type="organism name" value="human"/>
</dbReference>
<dbReference type="Pharos" id="A0A0B4J262">
    <property type="development level" value="Tdark"/>
</dbReference>
<dbReference type="PRO" id="PR:A0A0B4J262"/>
<dbReference type="Proteomes" id="UP000005640">
    <property type="component" value="Chromosome 14"/>
</dbReference>
<dbReference type="RNAct" id="A0A0B4J262">
    <property type="molecule type" value="protein"/>
</dbReference>
<dbReference type="Bgee" id="ENSG00000211795">
    <property type="expression patterns" value="Expressed in male germ line stem cell (sensu Vertebrata) in testis and 94 other cell types or tissues"/>
</dbReference>
<dbReference type="GO" id="GO:0042101">
    <property type="term" value="C:T cell receptor complex"/>
    <property type="evidence" value="ECO:0007669"/>
    <property type="project" value="UniProtKB-KW"/>
</dbReference>
<dbReference type="GO" id="GO:0002250">
    <property type="term" value="P:adaptive immune response"/>
    <property type="evidence" value="ECO:0007669"/>
    <property type="project" value="UniProtKB-KW"/>
</dbReference>
<dbReference type="Gene3D" id="2.60.40.10">
    <property type="entry name" value="Immunoglobulins"/>
    <property type="match status" value="1"/>
</dbReference>
<dbReference type="InterPro" id="IPR007110">
    <property type="entry name" value="Ig-like_dom"/>
</dbReference>
<dbReference type="InterPro" id="IPR036179">
    <property type="entry name" value="Ig-like_dom_sf"/>
</dbReference>
<dbReference type="InterPro" id="IPR013783">
    <property type="entry name" value="Ig-like_fold"/>
</dbReference>
<dbReference type="InterPro" id="IPR013106">
    <property type="entry name" value="Ig_V-set"/>
</dbReference>
<dbReference type="InterPro" id="IPR051287">
    <property type="entry name" value="TCR_variable_region"/>
</dbReference>
<dbReference type="PANTHER" id="PTHR19367:SF11">
    <property type="entry name" value="T CELL RECEPTOR ALPHA VARIABLE 8-6"/>
    <property type="match status" value="1"/>
</dbReference>
<dbReference type="PANTHER" id="PTHR19367">
    <property type="entry name" value="T-CELL RECEPTOR ALPHA CHAIN V REGION"/>
    <property type="match status" value="1"/>
</dbReference>
<dbReference type="Pfam" id="PF07686">
    <property type="entry name" value="V-set"/>
    <property type="match status" value="1"/>
</dbReference>
<dbReference type="SMART" id="SM00406">
    <property type="entry name" value="IGv"/>
    <property type="match status" value="1"/>
</dbReference>
<dbReference type="SUPFAM" id="SSF48726">
    <property type="entry name" value="Immunoglobulin"/>
    <property type="match status" value="1"/>
</dbReference>
<dbReference type="PROSITE" id="PS50835">
    <property type="entry name" value="IG_LIKE"/>
    <property type="match status" value="1"/>
</dbReference>